<dbReference type="EMBL" id="EF178474">
    <property type="protein sequence ID" value="ABM54177.1"/>
    <property type="molecule type" value="mRNA"/>
</dbReference>
<dbReference type="RefSeq" id="NP_001078912.1">
    <property type="nucleotide sequence ID" value="NM_001085443.1"/>
</dbReference>
<dbReference type="FunCoup" id="A1Z623">
    <property type="interactions" value="1493"/>
</dbReference>
<dbReference type="STRING" id="9823.ENSSSCP00000023410"/>
<dbReference type="PaxDb" id="9823-ENSSSCP00000023410"/>
<dbReference type="PeptideAtlas" id="A1Z623"/>
<dbReference type="Ensembl" id="ENSSSCT00000028257.3">
    <property type="protein sequence ID" value="ENSSSCP00000023410.2"/>
    <property type="gene ID" value="ENSSSCG00000030125.4"/>
</dbReference>
<dbReference type="Ensembl" id="ENSSSCT00015069317.1">
    <property type="protein sequence ID" value="ENSSSCP00015027755.1"/>
    <property type="gene ID" value="ENSSSCG00015052041.1"/>
</dbReference>
<dbReference type="Ensembl" id="ENSSSCT00025008955.1">
    <property type="protein sequence ID" value="ENSSSCP00025003526.1"/>
    <property type="gene ID" value="ENSSSCG00025006762.1"/>
</dbReference>
<dbReference type="Ensembl" id="ENSSSCT00030016349.1">
    <property type="protein sequence ID" value="ENSSSCP00030007319.1"/>
    <property type="gene ID" value="ENSSSCG00030011926.1"/>
</dbReference>
<dbReference type="Ensembl" id="ENSSSCT00035103035.1">
    <property type="protein sequence ID" value="ENSSSCP00035044020.1"/>
    <property type="gene ID" value="ENSSSCG00035075794.1"/>
</dbReference>
<dbReference type="Ensembl" id="ENSSSCT00040087579.1">
    <property type="protein sequence ID" value="ENSSSCP00040038473.1"/>
    <property type="gene ID" value="ENSSSCG00040064151.1"/>
</dbReference>
<dbReference type="Ensembl" id="ENSSSCT00045022408.1">
    <property type="protein sequence ID" value="ENSSSCP00045015436.1"/>
    <property type="gene ID" value="ENSSSCG00045013163.1"/>
</dbReference>
<dbReference type="Ensembl" id="ENSSSCT00050064105.1">
    <property type="protein sequence ID" value="ENSSSCP00050027588.1"/>
    <property type="gene ID" value="ENSSSCG00050047072.1"/>
</dbReference>
<dbReference type="Ensembl" id="ENSSSCT00055042936.1">
    <property type="protein sequence ID" value="ENSSSCP00055034158.1"/>
    <property type="gene ID" value="ENSSSCG00055021860.1"/>
</dbReference>
<dbReference type="Ensembl" id="ENSSSCT00060075079.1">
    <property type="protein sequence ID" value="ENSSSCP00060032428.1"/>
    <property type="gene ID" value="ENSSSCG00060055116.1"/>
</dbReference>
<dbReference type="Ensembl" id="ENSSSCT00065073845.1">
    <property type="protein sequence ID" value="ENSSSCP00065032157.1"/>
    <property type="gene ID" value="ENSSSCG00065053918.1"/>
</dbReference>
<dbReference type="Ensembl" id="ENSSSCT00070031340.1">
    <property type="protein sequence ID" value="ENSSSCP00070026124.1"/>
    <property type="gene ID" value="ENSSSCG00070015960.1"/>
</dbReference>
<dbReference type="Ensembl" id="ENSSSCT00090027237">
    <property type="protein sequence ID" value="ENSSSCP00090016831"/>
    <property type="gene ID" value="ENSSSCG00090015479"/>
</dbReference>
<dbReference type="Ensembl" id="ENSSSCT00130005711">
    <property type="protein sequence ID" value="ENSSSCP00130003845"/>
    <property type="gene ID" value="ENSSSCG00130003012"/>
</dbReference>
<dbReference type="GeneID" id="100038009"/>
<dbReference type="KEGG" id="ssc:100038009"/>
<dbReference type="CTD" id="9403"/>
<dbReference type="VGNC" id="VGNC:98854">
    <property type="gene designation" value="SELENOF"/>
</dbReference>
<dbReference type="eggNOG" id="KOG3384">
    <property type="taxonomic scope" value="Eukaryota"/>
</dbReference>
<dbReference type="GeneTree" id="ENSGT00940000154284"/>
<dbReference type="InParanoid" id="A1Z623"/>
<dbReference type="OMA" id="IKPHCKQ"/>
<dbReference type="OrthoDB" id="1910009at2759"/>
<dbReference type="Proteomes" id="UP000008227">
    <property type="component" value="Chromosome 4"/>
</dbReference>
<dbReference type="Proteomes" id="UP000314985">
    <property type="component" value="Chromosome 4"/>
</dbReference>
<dbReference type="Proteomes" id="UP000694570">
    <property type="component" value="Unplaced"/>
</dbReference>
<dbReference type="Proteomes" id="UP000694571">
    <property type="component" value="Unplaced"/>
</dbReference>
<dbReference type="Proteomes" id="UP000694720">
    <property type="component" value="Unplaced"/>
</dbReference>
<dbReference type="Proteomes" id="UP000694722">
    <property type="component" value="Unplaced"/>
</dbReference>
<dbReference type="Proteomes" id="UP000694723">
    <property type="component" value="Unplaced"/>
</dbReference>
<dbReference type="Proteomes" id="UP000694724">
    <property type="component" value="Unplaced"/>
</dbReference>
<dbReference type="Proteomes" id="UP000694725">
    <property type="component" value="Unplaced"/>
</dbReference>
<dbReference type="Proteomes" id="UP000694726">
    <property type="component" value="Unplaced"/>
</dbReference>
<dbReference type="Proteomes" id="UP000694727">
    <property type="component" value="Unplaced"/>
</dbReference>
<dbReference type="Proteomes" id="UP000694728">
    <property type="component" value="Unplaced"/>
</dbReference>
<dbReference type="Bgee" id="ENSSSCG00000030125">
    <property type="expression patterns" value="Expressed in hindlimb bud and 42 other cell types or tissues"/>
</dbReference>
<dbReference type="GO" id="GO:0005788">
    <property type="term" value="C:endoplasmic reticulum lumen"/>
    <property type="evidence" value="ECO:0000318"/>
    <property type="project" value="GO_Central"/>
</dbReference>
<dbReference type="GO" id="GO:0016491">
    <property type="term" value="F:oxidoreductase activity"/>
    <property type="evidence" value="ECO:0000318"/>
    <property type="project" value="GO_Central"/>
</dbReference>
<dbReference type="FunFam" id="3.40.30.50:FF:000001">
    <property type="entry name" value="15 kDa selenoprotein"/>
    <property type="match status" value="1"/>
</dbReference>
<dbReference type="Gene3D" id="3.40.30.50">
    <property type="entry name" value="Sep15/SelM thioredoxin-like domain, active-site redox motif"/>
    <property type="match status" value="1"/>
</dbReference>
<dbReference type="InterPro" id="IPR038219">
    <property type="entry name" value="Sep15/SelM_sf"/>
</dbReference>
<dbReference type="InterPro" id="IPR039992">
    <property type="entry name" value="Sep15_SelM"/>
</dbReference>
<dbReference type="InterPro" id="IPR014912">
    <property type="entry name" value="Sep15_SelM_dom"/>
</dbReference>
<dbReference type="InterPro" id="IPR036249">
    <property type="entry name" value="Thioredoxin-like_sf"/>
</dbReference>
<dbReference type="PANTHER" id="PTHR13077">
    <property type="entry name" value="SELENOPROTEIN F"/>
    <property type="match status" value="1"/>
</dbReference>
<dbReference type="PANTHER" id="PTHR13077:SF6">
    <property type="entry name" value="SELENOPROTEIN F"/>
    <property type="match status" value="1"/>
</dbReference>
<dbReference type="Pfam" id="PF08806">
    <property type="entry name" value="Sep15_SelM"/>
    <property type="match status" value="1"/>
</dbReference>
<dbReference type="SUPFAM" id="SSF52833">
    <property type="entry name" value="Thioredoxin-like"/>
    <property type="match status" value="1"/>
</dbReference>
<organism>
    <name type="scientific">Sus scrofa</name>
    <name type="common">Pig</name>
    <dbReference type="NCBI Taxonomy" id="9823"/>
    <lineage>
        <taxon>Eukaryota</taxon>
        <taxon>Metazoa</taxon>
        <taxon>Chordata</taxon>
        <taxon>Craniata</taxon>
        <taxon>Vertebrata</taxon>
        <taxon>Euteleostomi</taxon>
        <taxon>Mammalia</taxon>
        <taxon>Eutheria</taxon>
        <taxon>Laurasiatheria</taxon>
        <taxon>Artiodactyla</taxon>
        <taxon>Suina</taxon>
        <taxon>Suidae</taxon>
        <taxon>Sus</taxon>
    </lineage>
</organism>
<gene>
    <name evidence="2" type="primary">SELENOF</name>
    <name evidence="7" type="synonym">SEP15</name>
</gene>
<protein>
    <recommendedName>
        <fullName evidence="2">Selenoprotein F</fullName>
    </recommendedName>
    <alternativeName>
        <fullName evidence="5">15 kDa selenoprotein</fullName>
    </alternativeName>
</protein>
<accession>A1Z623</accession>
<comment type="function">
    <text evidence="2 3">May be involved in redox reactions associated with the formation of disulfide bonds (By similarity). May contribute to the quality control of protein folding in the endoplasmic reticulum. May regulate protein folding by enhancing the catalytic activity of UGGT1/UGCGL1 and UGGT2/UGCGL2 (By similarity).</text>
</comment>
<comment type="subunit">
    <text evidence="2">Forms a tight complex with UGGT1/UGCGL1. Interacts with UGGT2/UGCGL2. Interacts with RDH11.</text>
</comment>
<comment type="subcellular location">
    <subcellularLocation>
        <location evidence="1">Endoplasmic reticulum lumen</location>
    </subcellularLocation>
    <text evidence="1">The association with UGGT1/UGCGL1 is essential for its retention in the endoplasmic reticulum.</text>
</comment>
<comment type="similarity">
    <text evidence="6">Belongs to the selenoprotein M/F family.</text>
</comment>
<sequence length="162" mass="17843">MAAEPGGWLGPALGLRLLLATALQMVSAFGAEFSSESCRELGFSSNLLCGSCDLLGQFDLLQLDPDCRGCCQEEAQFETKKLYAGAILEVCGUKLGRFPQVQAFVRSDKPKLFRGLQIKYVRGSDPVLKLLDDNGNIAEELSILKWNTDSVEEFLSEKLQRV</sequence>
<feature type="signal peptide" evidence="4">
    <location>
        <begin position="1"/>
        <end position="28"/>
    </location>
</feature>
<feature type="chain" id="PRO_0000318610" description="Selenoprotein F">
    <location>
        <begin position="29"/>
        <end position="162"/>
    </location>
</feature>
<feature type="non-standard amino acid" description="Selenocysteine">
    <location>
        <position position="93"/>
    </location>
</feature>
<reference key="1">
    <citation type="submission" date="2006-12" db="EMBL/GenBank/DDBJ databases">
        <title>Cloning and characterization of pig selenoprotein 15kDa.</title>
        <authorList>
            <person name="Zhou J.C."/>
            <person name="Zhao H."/>
            <person name="Sun Q."/>
            <person name="Wang K.N."/>
            <person name="Xia X.J."/>
            <person name="Lei X.G."/>
        </authorList>
    </citation>
    <scope>NUCLEOTIDE SEQUENCE [MRNA]</scope>
    <source>
        <tissue>Spleen</tissue>
    </source>
</reference>
<evidence type="ECO:0000250" key="1"/>
<evidence type="ECO:0000250" key="2">
    <source>
        <dbReference type="UniProtKB" id="O60613"/>
    </source>
</evidence>
<evidence type="ECO:0000250" key="3">
    <source>
        <dbReference type="UniProtKB" id="Q923V8"/>
    </source>
</evidence>
<evidence type="ECO:0000255" key="4"/>
<evidence type="ECO:0000303" key="5">
    <source ref="1"/>
</evidence>
<evidence type="ECO:0000305" key="6"/>
<evidence type="ECO:0000312" key="7">
    <source>
        <dbReference type="EMBL" id="ABM54177.1"/>
    </source>
</evidence>
<proteinExistence type="evidence at transcript level"/>
<name>SEP15_PIG</name>
<keyword id="KW-0256">Endoplasmic reticulum</keyword>
<keyword id="KW-1185">Reference proteome</keyword>
<keyword id="KW-0712">Selenocysteine</keyword>
<keyword id="KW-0732">Signal</keyword>